<proteinExistence type="inferred from homology"/>
<protein>
    <recommendedName>
        <fullName evidence="1">Isoleucine--tRNA ligase</fullName>
        <ecNumber evidence="1">6.1.1.5</ecNumber>
    </recommendedName>
    <alternativeName>
        <fullName evidence="1">Isoleucyl-tRNA synthetase</fullName>
        <shortName evidence="1">IleRS</shortName>
    </alternativeName>
</protein>
<keyword id="KW-0030">Aminoacyl-tRNA synthetase</keyword>
<keyword id="KW-0067">ATP-binding</keyword>
<keyword id="KW-0963">Cytoplasm</keyword>
<keyword id="KW-0436">Ligase</keyword>
<keyword id="KW-0479">Metal-binding</keyword>
<keyword id="KW-0547">Nucleotide-binding</keyword>
<keyword id="KW-0648">Protein biosynthesis</keyword>
<keyword id="KW-1185">Reference proteome</keyword>
<keyword id="KW-0862">Zinc</keyword>
<organism>
    <name type="scientific">Enterococcus faecalis (strain ATCC 700802 / V583)</name>
    <dbReference type="NCBI Taxonomy" id="226185"/>
    <lineage>
        <taxon>Bacteria</taxon>
        <taxon>Bacillati</taxon>
        <taxon>Bacillota</taxon>
        <taxon>Bacilli</taxon>
        <taxon>Lactobacillales</taxon>
        <taxon>Enterococcaceae</taxon>
        <taxon>Enterococcus</taxon>
    </lineage>
</organism>
<feature type="chain" id="PRO_0000098382" description="Isoleucine--tRNA ligase">
    <location>
        <begin position="1"/>
        <end position="926"/>
    </location>
</feature>
<feature type="region of interest" description="Disordered" evidence="2">
    <location>
        <begin position="1"/>
        <end position="21"/>
    </location>
</feature>
<feature type="short sequence motif" description="'HIGH' region">
    <location>
        <begin position="57"/>
        <end position="67"/>
    </location>
</feature>
<feature type="short sequence motif" description="'KMSKS' region">
    <location>
        <begin position="593"/>
        <end position="597"/>
    </location>
</feature>
<feature type="binding site" evidence="1">
    <location>
        <position position="552"/>
    </location>
    <ligand>
        <name>L-isoleucyl-5'-AMP</name>
        <dbReference type="ChEBI" id="CHEBI:178002"/>
    </ligand>
</feature>
<feature type="binding site" evidence="1">
    <location>
        <position position="596"/>
    </location>
    <ligand>
        <name>ATP</name>
        <dbReference type="ChEBI" id="CHEBI:30616"/>
    </ligand>
</feature>
<feature type="binding site" evidence="1">
    <location>
        <position position="886"/>
    </location>
    <ligand>
        <name>Zn(2+)</name>
        <dbReference type="ChEBI" id="CHEBI:29105"/>
    </ligand>
</feature>
<feature type="binding site" evidence="1">
    <location>
        <position position="889"/>
    </location>
    <ligand>
        <name>Zn(2+)</name>
        <dbReference type="ChEBI" id="CHEBI:29105"/>
    </ligand>
</feature>
<feature type="binding site" evidence="1">
    <location>
        <position position="906"/>
    </location>
    <ligand>
        <name>Zn(2+)</name>
        <dbReference type="ChEBI" id="CHEBI:29105"/>
    </ligand>
</feature>
<feature type="binding site" evidence="1">
    <location>
        <position position="909"/>
    </location>
    <ligand>
        <name>Zn(2+)</name>
        <dbReference type="ChEBI" id="CHEBI:29105"/>
    </ligand>
</feature>
<dbReference type="EC" id="6.1.1.5" evidence="1"/>
<dbReference type="EMBL" id="AE016830">
    <property type="protein sequence ID" value="AAO80809.1"/>
    <property type="molecule type" value="Genomic_DNA"/>
</dbReference>
<dbReference type="RefSeq" id="NP_814739.1">
    <property type="nucleotide sequence ID" value="NC_004668.1"/>
</dbReference>
<dbReference type="RefSeq" id="WP_002381313.1">
    <property type="nucleotide sequence ID" value="NZ_KE136527.1"/>
</dbReference>
<dbReference type="SMR" id="Q836V1"/>
<dbReference type="STRING" id="226185.EF_1003"/>
<dbReference type="EnsemblBacteria" id="AAO80809">
    <property type="protein sequence ID" value="AAO80809"/>
    <property type="gene ID" value="EF_1003"/>
</dbReference>
<dbReference type="KEGG" id="efa:EF1003"/>
<dbReference type="PATRIC" id="fig|226185.45.peg.3209"/>
<dbReference type="eggNOG" id="COG0060">
    <property type="taxonomic scope" value="Bacteria"/>
</dbReference>
<dbReference type="HOGENOM" id="CLU_001493_7_1_9"/>
<dbReference type="Proteomes" id="UP000001415">
    <property type="component" value="Chromosome"/>
</dbReference>
<dbReference type="GO" id="GO:0005829">
    <property type="term" value="C:cytosol"/>
    <property type="evidence" value="ECO:0007669"/>
    <property type="project" value="TreeGrafter"/>
</dbReference>
<dbReference type="GO" id="GO:0002161">
    <property type="term" value="F:aminoacyl-tRNA deacylase activity"/>
    <property type="evidence" value="ECO:0007669"/>
    <property type="project" value="InterPro"/>
</dbReference>
<dbReference type="GO" id="GO:0005524">
    <property type="term" value="F:ATP binding"/>
    <property type="evidence" value="ECO:0007669"/>
    <property type="project" value="UniProtKB-UniRule"/>
</dbReference>
<dbReference type="GO" id="GO:0004822">
    <property type="term" value="F:isoleucine-tRNA ligase activity"/>
    <property type="evidence" value="ECO:0007669"/>
    <property type="project" value="UniProtKB-UniRule"/>
</dbReference>
<dbReference type="GO" id="GO:0000049">
    <property type="term" value="F:tRNA binding"/>
    <property type="evidence" value="ECO:0007669"/>
    <property type="project" value="InterPro"/>
</dbReference>
<dbReference type="GO" id="GO:0008270">
    <property type="term" value="F:zinc ion binding"/>
    <property type="evidence" value="ECO:0007669"/>
    <property type="project" value="UniProtKB-UniRule"/>
</dbReference>
<dbReference type="GO" id="GO:0006428">
    <property type="term" value="P:isoleucyl-tRNA aminoacylation"/>
    <property type="evidence" value="ECO:0007669"/>
    <property type="project" value="UniProtKB-UniRule"/>
</dbReference>
<dbReference type="CDD" id="cd07960">
    <property type="entry name" value="Anticodon_Ia_Ile_BEm"/>
    <property type="match status" value="1"/>
</dbReference>
<dbReference type="CDD" id="cd00818">
    <property type="entry name" value="IleRS_core"/>
    <property type="match status" value="1"/>
</dbReference>
<dbReference type="FunFam" id="1.10.10.830:FF:000001">
    <property type="entry name" value="Isoleucine--tRNA ligase"/>
    <property type="match status" value="1"/>
</dbReference>
<dbReference type="FunFam" id="1.10.730.20:FF:000001">
    <property type="entry name" value="Isoleucine--tRNA ligase"/>
    <property type="match status" value="1"/>
</dbReference>
<dbReference type="FunFam" id="3.40.50.620:FF:000152">
    <property type="entry name" value="Isoleucine--tRNA ligase"/>
    <property type="match status" value="1"/>
</dbReference>
<dbReference type="FunFam" id="3.90.740.10:FF:000006">
    <property type="entry name" value="Isoleucine--tRNA ligase"/>
    <property type="match status" value="1"/>
</dbReference>
<dbReference type="Gene3D" id="1.10.730.20">
    <property type="match status" value="1"/>
</dbReference>
<dbReference type="Gene3D" id="3.40.50.620">
    <property type="entry name" value="HUPs"/>
    <property type="match status" value="2"/>
</dbReference>
<dbReference type="Gene3D" id="1.10.10.830">
    <property type="entry name" value="Ile-tRNA synthetase CP2 domain-like"/>
    <property type="match status" value="1"/>
</dbReference>
<dbReference type="Gene3D" id="3.90.740.10">
    <property type="entry name" value="Valyl/Leucyl/Isoleucyl-tRNA synthetase, editing domain"/>
    <property type="match status" value="1"/>
</dbReference>
<dbReference type="HAMAP" id="MF_02002">
    <property type="entry name" value="Ile_tRNA_synth_type1"/>
    <property type="match status" value="1"/>
</dbReference>
<dbReference type="InterPro" id="IPR001412">
    <property type="entry name" value="aa-tRNA-synth_I_CS"/>
</dbReference>
<dbReference type="InterPro" id="IPR002300">
    <property type="entry name" value="aa-tRNA-synth_Ia"/>
</dbReference>
<dbReference type="InterPro" id="IPR033708">
    <property type="entry name" value="Anticodon_Ile_BEm"/>
</dbReference>
<dbReference type="InterPro" id="IPR002301">
    <property type="entry name" value="Ile-tRNA-ligase"/>
</dbReference>
<dbReference type="InterPro" id="IPR023585">
    <property type="entry name" value="Ile-tRNA-ligase_type1"/>
</dbReference>
<dbReference type="InterPro" id="IPR050081">
    <property type="entry name" value="Ile-tRNA_ligase"/>
</dbReference>
<dbReference type="InterPro" id="IPR013155">
    <property type="entry name" value="M/V/L/I-tRNA-synth_anticd-bd"/>
</dbReference>
<dbReference type="InterPro" id="IPR014729">
    <property type="entry name" value="Rossmann-like_a/b/a_fold"/>
</dbReference>
<dbReference type="InterPro" id="IPR009080">
    <property type="entry name" value="tRNAsynth_Ia_anticodon-bd"/>
</dbReference>
<dbReference type="InterPro" id="IPR009008">
    <property type="entry name" value="Val/Leu/Ile-tRNA-synth_edit"/>
</dbReference>
<dbReference type="InterPro" id="IPR010663">
    <property type="entry name" value="Znf_FPG/IleRS"/>
</dbReference>
<dbReference type="NCBIfam" id="TIGR00392">
    <property type="entry name" value="ileS"/>
    <property type="match status" value="1"/>
</dbReference>
<dbReference type="PANTHER" id="PTHR42765:SF1">
    <property type="entry name" value="ISOLEUCINE--TRNA LIGASE, MITOCHONDRIAL"/>
    <property type="match status" value="1"/>
</dbReference>
<dbReference type="PANTHER" id="PTHR42765">
    <property type="entry name" value="SOLEUCYL-TRNA SYNTHETASE"/>
    <property type="match status" value="1"/>
</dbReference>
<dbReference type="Pfam" id="PF08264">
    <property type="entry name" value="Anticodon_1"/>
    <property type="match status" value="1"/>
</dbReference>
<dbReference type="Pfam" id="PF00133">
    <property type="entry name" value="tRNA-synt_1"/>
    <property type="match status" value="1"/>
</dbReference>
<dbReference type="Pfam" id="PF06827">
    <property type="entry name" value="zf-FPG_IleRS"/>
    <property type="match status" value="1"/>
</dbReference>
<dbReference type="PRINTS" id="PR00984">
    <property type="entry name" value="TRNASYNTHILE"/>
</dbReference>
<dbReference type="SUPFAM" id="SSF47323">
    <property type="entry name" value="Anticodon-binding domain of a subclass of class I aminoacyl-tRNA synthetases"/>
    <property type="match status" value="1"/>
</dbReference>
<dbReference type="SUPFAM" id="SSF52374">
    <property type="entry name" value="Nucleotidylyl transferase"/>
    <property type="match status" value="1"/>
</dbReference>
<dbReference type="SUPFAM" id="SSF50677">
    <property type="entry name" value="ValRS/IleRS/LeuRS editing domain"/>
    <property type="match status" value="1"/>
</dbReference>
<dbReference type="PROSITE" id="PS00178">
    <property type="entry name" value="AA_TRNA_LIGASE_I"/>
    <property type="match status" value="1"/>
</dbReference>
<gene>
    <name evidence="1" type="primary">ileS</name>
    <name type="ordered locus">EF_1003</name>
</gene>
<accession>Q836V1</accession>
<comment type="function">
    <text evidence="1">Catalyzes the attachment of isoleucine to tRNA(Ile). As IleRS can inadvertently accommodate and process structurally similar amino acids such as valine, to avoid such errors it has two additional distinct tRNA(Ile)-dependent editing activities. One activity is designated as 'pretransfer' editing and involves the hydrolysis of activated Val-AMP. The other activity is designated 'posttransfer' editing and involves deacylation of mischarged Val-tRNA(Ile).</text>
</comment>
<comment type="catalytic activity">
    <reaction evidence="1">
        <text>tRNA(Ile) + L-isoleucine + ATP = L-isoleucyl-tRNA(Ile) + AMP + diphosphate</text>
        <dbReference type="Rhea" id="RHEA:11060"/>
        <dbReference type="Rhea" id="RHEA-COMP:9666"/>
        <dbReference type="Rhea" id="RHEA-COMP:9695"/>
        <dbReference type="ChEBI" id="CHEBI:30616"/>
        <dbReference type="ChEBI" id="CHEBI:33019"/>
        <dbReference type="ChEBI" id="CHEBI:58045"/>
        <dbReference type="ChEBI" id="CHEBI:78442"/>
        <dbReference type="ChEBI" id="CHEBI:78528"/>
        <dbReference type="ChEBI" id="CHEBI:456215"/>
        <dbReference type="EC" id="6.1.1.5"/>
    </reaction>
</comment>
<comment type="cofactor">
    <cofactor evidence="1">
        <name>Zn(2+)</name>
        <dbReference type="ChEBI" id="CHEBI:29105"/>
    </cofactor>
    <text evidence="1">Binds 1 zinc ion per subunit.</text>
</comment>
<comment type="subunit">
    <text evidence="1">Monomer.</text>
</comment>
<comment type="subcellular location">
    <subcellularLocation>
        <location evidence="1">Cytoplasm</location>
    </subcellularLocation>
</comment>
<comment type="domain">
    <text evidence="1">IleRS has two distinct active sites: one for aminoacylation and one for editing. The misactivated valine is translocated from the active site to the editing site, which sterically excludes the correctly activated isoleucine. The single editing site contains two valyl binding pockets, one specific for each substrate (Val-AMP or Val-tRNA(Ile)).</text>
</comment>
<comment type="similarity">
    <text evidence="1">Belongs to the class-I aminoacyl-tRNA synthetase family. IleS type 1 subfamily.</text>
</comment>
<evidence type="ECO:0000255" key="1">
    <source>
        <dbReference type="HAMAP-Rule" id="MF_02002"/>
    </source>
</evidence>
<evidence type="ECO:0000256" key="2">
    <source>
        <dbReference type="SAM" id="MobiDB-lite"/>
    </source>
</evidence>
<sequence>MKMKETLQLGKTAFPMRGNLPNREAEWQKDWEEKGLYEQRQKLNEGKPTFVLHDGPPYANGNIHLGHSLNKISKDIIIRSKSMSGFRSPYVPGWDTHGLPIEQVLTNKGVKRKEMTVAEYREKCKEYALSQVDKQRNDFKRLGVSGDWEHPYITLDPEYEAAEIRVFGKMAEKGYIYKGLKPIYWSPSSESSLAEAEIEYKDVKSPSIYVAFNVADGKGLLDNETAFVIWTTTPWTLPANLGISVNPDFTYVEVKADGRKFVIAKDLLTTVKEAIGWEEVEVLREFSGEKLDRMTAQHPFYDRTSLVMLGDHVTLDAGTGLVHTAPGHGEDDYIVSRKYDLPVISPVDSRGVFTDEAPGFEGIFYDKANPMITELLEEKGALLKLDFFTHSYPHDWRTKKPVIYRATPQWFASISKFRQDILDEVEKVDWLIPWGKTRLYNMIRDRGDWVISRQRAWGVPLPIFYAENGEAIITPETIEHVANLFAEHGSNIWFMREAKELLPAGFTHPGSPNGEFTKETDIMDVWFDSGSSHEGVLREREELTFPADMYLEGSDQYRGWFNSSITTSVAINGVAPYKSIISQGMVLDGEGRKMSKSLGNTILPEKVINQMGADILRLWVSSVDAEADVRVSMDILNQVSEVYRKIRNTMRFLLANTSDFNPAEHTVAYADLRSVDKYMTVRLNQVIQEIRENGYEKYNFMHIYRTVMNFLTVDLSSFYLDFAKDVVYIEAENDYQRRCMQTVFYQTLVSLTKLLTPIIPHTAEEIWSFLQEEEEYVQLAEFPGYETFTNEEELMDTWAAFMDFRDNVLKALEEARHSKLIGKSLEAKVTVYPNEQIRQLMTAVDADIAQLLIVSDFEVSKEVAPSEAVQFEDMAILVEKAEGETCDRCRSVRQDVGSDEKLPTLCGRCAHIVEENYPEAVAEGFE</sequence>
<reference key="1">
    <citation type="journal article" date="2003" name="Science">
        <title>Role of mobile DNA in the evolution of vancomycin-resistant Enterococcus faecalis.</title>
        <authorList>
            <person name="Paulsen I.T."/>
            <person name="Banerjei L."/>
            <person name="Myers G.S.A."/>
            <person name="Nelson K.E."/>
            <person name="Seshadri R."/>
            <person name="Read T.D."/>
            <person name="Fouts D.E."/>
            <person name="Eisen J.A."/>
            <person name="Gill S.R."/>
            <person name="Heidelberg J.F."/>
            <person name="Tettelin H."/>
            <person name="Dodson R.J."/>
            <person name="Umayam L.A."/>
            <person name="Brinkac L.M."/>
            <person name="Beanan M.J."/>
            <person name="Daugherty S.C."/>
            <person name="DeBoy R.T."/>
            <person name="Durkin S.A."/>
            <person name="Kolonay J.F."/>
            <person name="Madupu R."/>
            <person name="Nelson W.C."/>
            <person name="Vamathevan J.J."/>
            <person name="Tran B."/>
            <person name="Upton J."/>
            <person name="Hansen T."/>
            <person name="Shetty J."/>
            <person name="Khouri H.M."/>
            <person name="Utterback T.R."/>
            <person name="Radune D."/>
            <person name="Ketchum K.A."/>
            <person name="Dougherty B.A."/>
            <person name="Fraser C.M."/>
        </authorList>
    </citation>
    <scope>NUCLEOTIDE SEQUENCE [LARGE SCALE GENOMIC DNA]</scope>
    <source>
        <strain>ATCC 700802 / V583</strain>
    </source>
</reference>
<name>SYI_ENTFA</name>